<gene>
    <name evidence="1" type="primary">dapE</name>
    <name type="ordered locus">HCH_05260</name>
</gene>
<feature type="chain" id="PRO_0000375582" description="Succinyl-diaminopimelate desuccinylase">
    <location>
        <begin position="1"/>
        <end position="383"/>
    </location>
</feature>
<feature type="active site" evidence="1">
    <location>
        <position position="72"/>
    </location>
</feature>
<feature type="active site" description="Proton acceptor" evidence="1">
    <location>
        <position position="137"/>
    </location>
</feature>
<feature type="binding site" evidence="1">
    <location>
        <position position="70"/>
    </location>
    <ligand>
        <name>Zn(2+)</name>
        <dbReference type="ChEBI" id="CHEBI:29105"/>
        <label>1</label>
    </ligand>
</feature>
<feature type="binding site" evidence="1">
    <location>
        <position position="103"/>
    </location>
    <ligand>
        <name>Zn(2+)</name>
        <dbReference type="ChEBI" id="CHEBI:29105"/>
        <label>1</label>
    </ligand>
</feature>
<feature type="binding site" evidence="1">
    <location>
        <position position="103"/>
    </location>
    <ligand>
        <name>Zn(2+)</name>
        <dbReference type="ChEBI" id="CHEBI:29105"/>
        <label>2</label>
    </ligand>
</feature>
<feature type="binding site" evidence="1">
    <location>
        <position position="138"/>
    </location>
    <ligand>
        <name>Zn(2+)</name>
        <dbReference type="ChEBI" id="CHEBI:29105"/>
        <label>2</label>
    </ligand>
</feature>
<feature type="binding site" evidence="1">
    <location>
        <position position="166"/>
    </location>
    <ligand>
        <name>Zn(2+)</name>
        <dbReference type="ChEBI" id="CHEBI:29105"/>
        <label>1</label>
    </ligand>
</feature>
<feature type="binding site" evidence="1">
    <location>
        <position position="352"/>
    </location>
    <ligand>
        <name>Zn(2+)</name>
        <dbReference type="ChEBI" id="CHEBI:29105"/>
        <label>2</label>
    </ligand>
</feature>
<sequence>MTDSLSPTLELAVELIKRPSVTPHDAGCQELLSQRLQTIGFEITDLPFGEVQNFWARRGSQAPLVVFAGHTDVVPTGPEEKWEHPPFAAEVKDGVLHGRGAADMKGSLAAFMTACERFVKKHPNHRGSIGWLITSDEEGHAVNGTVKVVEYLVDKGEVIDWCIVGEPSSTHTVGDVIKNGRRGSIGATLIVKGVQGHVAYPHLADNPIHKAAPALAELANEKWDEGNAFFPATSLQISNINGGTGATNVIPGELNIMFNLRFSTELNADVIKQRSEAILQKHGLDYDIEWRLYGEPFLTSKGPLIEATQKAIKHVRGSDTTLSTSGGTSDGRFIAPTGAQVVELGPCNATIHRINEQVLVSEIDQLSSIYEHILEELLVVGSE</sequence>
<proteinExistence type="inferred from homology"/>
<name>DAPE_HAHCH</name>
<dbReference type="EC" id="3.5.1.18" evidence="1"/>
<dbReference type="EMBL" id="CP000155">
    <property type="protein sequence ID" value="ABC31934.1"/>
    <property type="molecule type" value="Genomic_DNA"/>
</dbReference>
<dbReference type="RefSeq" id="WP_011398998.1">
    <property type="nucleotide sequence ID" value="NC_007645.1"/>
</dbReference>
<dbReference type="SMR" id="Q2SBP0"/>
<dbReference type="STRING" id="349521.HCH_05260"/>
<dbReference type="KEGG" id="hch:HCH_05260"/>
<dbReference type="eggNOG" id="COG0624">
    <property type="taxonomic scope" value="Bacteria"/>
</dbReference>
<dbReference type="HOGENOM" id="CLU_021802_4_0_6"/>
<dbReference type="OrthoDB" id="9809784at2"/>
<dbReference type="UniPathway" id="UPA00034">
    <property type="reaction ID" value="UER00021"/>
</dbReference>
<dbReference type="Proteomes" id="UP000000238">
    <property type="component" value="Chromosome"/>
</dbReference>
<dbReference type="GO" id="GO:0008777">
    <property type="term" value="F:acetylornithine deacetylase activity"/>
    <property type="evidence" value="ECO:0007669"/>
    <property type="project" value="TreeGrafter"/>
</dbReference>
<dbReference type="GO" id="GO:0050897">
    <property type="term" value="F:cobalt ion binding"/>
    <property type="evidence" value="ECO:0007669"/>
    <property type="project" value="UniProtKB-UniRule"/>
</dbReference>
<dbReference type="GO" id="GO:0009014">
    <property type="term" value="F:succinyl-diaminopimelate desuccinylase activity"/>
    <property type="evidence" value="ECO:0007669"/>
    <property type="project" value="UniProtKB-UniRule"/>
</dbReference>
<dbReference type="GO" id="GO:0008270">
    <property type="term" value="F:zinc ion binding"/>
    <property type="evidence" value="ECO:0007669"/>
    <property type="project" value="UniProtKB-UniRule"/>
</dbReference>
<dbReference type="GO" id="GO:0019877">
    <property type="term" value="P:diaminopimelate biosynthetic process"/>
    <property type="evidence" value="ECO:0007669"/>
    <property type="project" value="UniProtKB-UniRule"/>
</dbReference>
<dbReference type="GO" id="GO:0006526">
    <property type="term" value="P:L-arginine biosynthetic process"/>
    <property type="evidence" value="ECO:0007669"/>
    <property type="project" value="TreeGrafter"/>
</dbReference>
<dbReference type="GO" id="GO:0009089">
    <property type="term" value="P:lysine biosynthetic process via diaminopimelate"/>
    <property type="evidence" value="ECO:0007669"/>
    <property type="project" value="UniProtKB-UniRule"/>
</dbReference>
<dbReference type="CDD" id="cd03891">
    <property type="entry name" value="M20_DapE_proteobac"/>
    <property type="match status" value="1"/>
</dbReference>
<dbReference type="FunFam" id="3.30.70.360:FF:000011">
    <property type="entry name" value="Succinyl-diaminopimelate desuccinylase"/>
    <property type="match status" value="1"/>
</dbReference>
<dbReference type="FunFam" id="3.40.630.10:FF:000005">
    <property type="entry name" value="Succinyl-diaminopimelate desuccinylase"/>
    <property type="match status" value="1"/>
</dbReference>
<dbReference type="Gene3D" id="3.40.630.10">
    <property type="entry name" value="Zn peptidases"/>
    <property type="match status" value="2"/>
</dbReference>
<dbReference type="HAMAP" id="MF_01690">
    <property type="entry name" value="DapE"/>
    <property type="match status" value="1"/>
</dbReference>
<dbReference type="InterPro" id="IPR036264">
    <property type="entry name" value="Bact_exopeptidase_dim_dom"/>
</dbReference>
<dbReference type="InterPro" id="IPR005941">
    <property type="entry name" value="DapE_proteobac"/>
</dbReference>
<dbReference type="InterPro" id="IPR002933">
    <property type="entry name" value="Peptidase_M20"/>
</dbReference>
<dbReference type="InterPro" id="IPR011650">
    <property type="entry name" value="Peptidase_M20_dimer"/>
</dbReference>
<dbReference type="InterPro" id="IPR050072">
    <property type="entry name" value="Peptidase_M20A"/>
</dbReference>
<dbReference type="NCBIfam" id="TIGR01246">
    <property type="entry name" value="dapE_proteo"/>
    <property type="match status" value="1"/>
</dbReference>
<dbReference type="NCBIfam" id="NF009557">
    <property type="entry name" value="PRK13009.1"/>
    <property type="match status" value="1"/>
</dbReference>
<dbReference type="PANTHER" id="PTHR43808">
    <property type="entry name" value="ACETYLORNITHINE DEACETYLASE"/>
    <property type="match status" value="1"/>
</dbReference>
<dbReference type="PANTHER" id="PTHR43808:SF31">
    <property type="entry name" value="N-ACETYL-L-CITRULLINE DEACETYLASE"/>
    <property type="match status" value="1"/>
</dbReference>
<dbReference type="Pfam" id="PF07687">
    <property type="entry name" value="M20_dimer"/>
    <property type="match status" value="1"/>
</dbReference>
<dbReference type="Pfam" id="PF01546">
    <property type="entry name" value="Peptidase_M20"/>
    <property type="match status" value="1"/>
</dbReference>
<dbReference type="SUPFAM" id="SSF55031">
    <property type="entry name" value="Bacterial exopeptidase dimerisation domain"/>
    <property type="match status" value="1"/>
</dbReference>
<dbReference type="SUPFAM" id="SSF53187">
    <property type="entry name" value="Zn-dependent exopeptidases"/>
    <property type="match status" value="1"/>
</dbReference>
<comment type="function">
    <text evidence="1">Catalyzes the hydrolysis of N-succinyl-L,L-diaminopimelic acid (SDAP), forming succinate and LL-2,6-diaminopimelate (DAP), an intermediate involved in the bacterial biosynthesis of lysine and meso-diaminopimelic acid, an essential component of bacterial cell walls.</text>
</comment>
<comment type="catalytic activity">
    <reaction evidence="1">
        <text>N-succinyl-(2S,6S)-2,6-diaminopimelate + H2O = (2S,6S)-2,6-diaminopimelate + succinate</text>
        <dbReference type="Rhea" id="RHEA:22608"/>
        <dbReference type="ChEBI" id="CHEBI:15377"/>
        <dbReference type="ChEBI" id="CHEBI:30031"/>
        <dbReference type="ChEBI" id="CHEBI:57609"/>
        <dbReference type="ChEBI" id="CHEBI:58087"/>
        <dbReference type="EC" id="3.5.1.18"/>
    </reaction>
</comment>
<comment type="cofactor">
    <cofactor evidence="1">
        <name>Zn(2+)</name>
        <dbReference type="ChEBI" id="CHEBI:29105"/>
    </cofactor>
    <cofactor evidence="1">
        <name>Co(2+)</name>
        <dbReference type="ChEBI" id="CHEBI:48828"/>
    </cofactor>
    <text evidence="1">Binds 2 Zn(2+) or Co(2+) ions per subunit.</text>
</comment>
<comment type="pathway">
    <text evidence="1">Amino-acid biosynthesis; L-lysine biosynthesis via DAP pathway; LL-2,6-diaminopimelate from (S)-tetrahydrodipicolinate (succinylase route): step 3/3.</text>
</comment>
<comment type="subunit">
    <text evidence="1">Homodimer.</text>
</comment>
<comment type="similarity">
    <text evidence="1">Belongs to the peptidase M20A family. DapE subfamily.</text>
</comment>
<protein>
    <recommendedName>
        <fullName evidence="1">Succinyl-diaminopimelate desuccinylase</fullName>
        <shortName evidence="1">SDAP desuccinylase</shortName>
        <ecNumber evidence="1">3.5.1.18</ecNumber>
    </recommendedName>
    <alternativeName>
        <fullName evidence="1">N-succinyl-LL-2,6-diaminoheptanedioate amidohydrolase</fullName>
    </alternativeName>
</protein>
<reference key="1">
    <citation type="journal article" date="2005" name="Nucleic Acids Res.">
        <title>Genomic blueprint of Hahella chejuensis, a marine microbe producing an algicidal agent.</title>
        <authorList>
            <person name="Jeong H."/>
            <person name="Yim J.H."/>
            <person name="Lee C."/>
            <person name="Choi S.-H."/>
            <person name="Park Y.K."/>
            <person name="Yoon S.H."/>
            <person name="Hur C.-G."/>
            <person name="Kang H.-Y."/>
            <person name="Kim D."/>
            <person name="Lee H.H."/>
            <person name="Park K.H."/>
            <person name="Park S.-H."/>
            <person name="Park H.-S."/>
            <person name="Lee H.K."/>
            <person name="Oh T.K."/>
            <person name="Kim J.F."/>
        </authorList>
    </citation>
    <scope>NUCLEOTIDE SEQUENCE [LARGE SCALE GENOMIC DNA]</scope>
    <source>
        <strain>KCTC 2396</strain>
    </source>
</reference>
<accession>Q2SBP0</accession>
<organism>
    <name type="scientific">Hahella chejuensis (strain KCTC 2396)</name>
    <dbReference type="NCBI Taxonomy" id="349521"/>
    <lineage>
        <taxon>Bacteria</taxon>
        <taxon>Pseudomonadati</taxon>
        <taxon>Pseudomonadota</taxon>
        <taxon>Gammaproteobacteria</taxon>
        <taxon>Oceanospirillales</taxon>
        <taxon>Hahellaceae</taxon>
        <taxon>Hahella</taxon>
    </lineage>
</organism>
<evidence type="ECO:0000255" key="1">
    <source>
        <dbReference type="HAMAP-Rule" id="MF_01690"/>
    </source>
</evidence>
<keyword id="KW-0028">Amino-acid biosynthesis</keyword>
<keyword id="KW-0170">Cobalt</keyword>
<keyword id="KW-0220">Diaminopimelate biosynthesis</keyword>
<keyword id="KW-0378">Hydrolase</keyword>
<keyword id="KW-0457">Lysine biosynthesis</keyword>
<keyword id="KW-0479">Metal-binding</keyword>
<keyword id="KW-1185">Reference proteome</keyword>
<keyword id="KW-0862">Zinc</keyword>